<organism>
    <name type="scientific">Aplysia californica</name>
    <name type="common">California sea hare</name>
    <dbReference type="NCBI Taxonomy" id="6500"/>
    <lineage>
        <taxon>Eukaryota</taxon>
        <taxon>Metazoa</taxon>
        <taxon>Spiralia</taxon>
        <taxon>Lophotrochozoa</taxon>
        <taxon>Mollusca</taxon>
        <taxon>Gastropoda</taxon>
        <taxon>Heterobranchia</taxon>
        <taxon>Euthyneura</taxon>
        <taxon>Tectipleura</taxon>
        <taxon>Aplysiida</taxon>
        <taxon>Aplysioidea</taxon>
        <taxon>Aplysiidae</taxon>
        <taxon>Aplysia</taxon>
    </lineage>
</organism>
<feature type="signal peptide" evidence="2">
    <location>
        <begin position="1"/>
        <end status="unknown"/>
    </location>
</feature>
<feature type="chain" id="PRO_0000342202" description="Neuromacin-like protein">
    <location>
        <begin status="unknown"/>
        <end position="76"/>
    </location>
</feature>
<feature type="disulfide bond" evidence="1">
    <location>
        <begin position="18"/>
        <end position="25"/>
    </location>
</feature>
<feature type="disulfide bond" evidence="1">
    <location>
        <begin position="40"/>
        <end position="44"/>
    </location>
</feature>
<feature type="disulfide bond" evidence="1">
    <location>
        <begin position="54"/>
        <end position="61"/>
    </location>
</feature>
<feature type="disulfide bond" evidence="1">
    <location>
        <begin position="72"/>
        <end position="74"/>
    </location>
</feature>
<evidence type="ECO:0000250" key="1"/>
<evidence type="ECO:0000255" key="2"/>
<evidence type="ECO:0000305" key="3"/>
<dbReference type="EMBL" id="DQ489547">
    <property type="protein sequence ID" value="ABF21076.1"/>
    <property type="molecule type" value="mRNA"/>
</dbReference>
<dbReference type="RefSeq" id="NP_001191629.1">
    <property type="nucleotide sequence ID" value="NM_001204700.1"/>
</dbReference>
<dbReference type="SMR" id="A5GZY1"/>
<dbReference type="GeneID" id="100533416"/>
<dbReference type="Proteomes" id="UP000694888">
    <property type="component" value="Unplaced"/>
</dbReference>
<dbReference type="GO" id="GO:0005576">
    <property type="term" value="C:extracellular region"/>
    <property type="evidence" value="ECO:0007669"/>
    <property type="project" value="UniProtKB-SubCell"/>
</dbReference>
<dbReference type="GO" id="GO:0006952">
    <property type="term" value="P:defense response"/>
    <property type="evidence" value="ECO:0007669"/>
    <property type="project" value="InterPro"/>
</dbReference>
<dbReference type="Gene3D" id="3.30.30.100">
    <property type="match status" value="1"/>
</dbReference>
<dbReference type="InterPro" id="IPR029230">
    <property type="entry name" value="Macin"/>
</dbReference>
<dbReference type="InterPro" id="IPR038456">
    <property type="entry name" value="Macin_sf"/>
</dbReference>
<dbReference type="Pfam" id="PF14865">
    <property type="entry name" value="Macin"/>
    <property type="match status" value="1"/>
</dbReference>
<comment type="subcellular location">
    <subcellularLocation>
        <location evidence="1">Secreted</location>
    </subcellularLocation>
</comment>
<comment type="similarity">
    <text evidence="3">Belongs to the macin family.</text>
</comment>
<proteinExistence type="inferred from homology"/>
<keyword id="KW-1015">Disulfide bond</keyword>
<keyword id="KW-0964">Secreted</keyword>
<keyword id="KW-0732">Signal</keyword>
<accession>A5GZY1</accession>
<name>NEURM_APLCA</name>
<reference key="1">
    <citation type="submission" date="2006-04" db="EMBL/GenBank/DDBJ databases">
        <title>The cloning of theromacin from Aplysia californica.</title>
        <authorList>
            <person name="Kohn A.B."/>
            <person name="Moroz L.L."/>
        </authorList>
    </citation>
    <scope>NUCLEOTIDE SEQUENCE [MRNA]</scope>
</reference>
<sequence>MDKKAANGGKEKGPLEACWDEWSRCTGWSSAGTGVLWKSCDDQCKKLGKSGGECVLTPSTCPFTRTDKAYQCQCKK</sequence>
<protein>
    <recommendedName>
        <fullName>Neuromacin-like protein</fullName>
    </recommendedName>
</protein>